<dbReference type="EMBL" id="AF310889">
    <property type="protein sequence ID" value="AAG45121.1"/>
    <property type="molecule type" value="Genomic_DNA"/>
</dbReference>
<dbReference type="EMBL" id="AAFI02000187">
    <property type="protein sequence ID" value="EAL61344.1"/>
    <property type="molecule type" value="Genomic_DNA"/>
</dbReference>
<dbReference type="EMBL" id="L11594">
    <property type="protein sequence ID" value="AAC37390.1"/>
    <property type="molecule type" value="mRNA"/>
</dbReference>
<dbReference type="RefSeq" id="XP_629838.1">
    <property type="nucleotide sequence ID" value="XM_629836.1"/>
</dbReference>
<dbReference type="SMR" id="P34150"/>
<dbReference type="FunCoup" id="P34150">
    <property type="interactions" value="52"/>
</dbReference>
<dbReference type="STRING" id="44689.P34150"/>
<dbReference type="PaxDb" id="44689-DDB0216194"/>
<dbReference type="EnsemblProtists" id="EAL61344">
    <property type="protein sequence ID" value="EAL61344"/>
    <property type="gene ID" value="DDB_G0291976"/>
</dbReference>
<dbReference type="GeneID" id="8628519"/>
<dbReference type="KEGG" id="ddi:DDB_G0291976"/>
<dbReference type="dictyBase" id="DDB_G0291976">
    <property type="gene designation" value="racD"/>
</dbReference>
<dbReference type="VEuPathDB" id="AmoebaDB:DDB_G0291976"/>
<dbReference type="eggNOG" id="KOG0393">
    <property type="taxonomic scope" value="Eukaryota"/>
</dbReference>
<dbReference type="HOGENOM" id="CLU_041217_21_1_1"/>
<dbReference type="InParanoid" id="P34150"/>
<dbReference type="OMA" id="FNCLEMY"/>
<dbReference type="PhylomeDB" id="P34150"/>
<dbReference type="Reactome" id="R-DDI-6798695">
    <property type="pathway name" value="Neutrophil degranulation"/>
</dbReference>
<dbReference type="Reactome" id="R-DDI-9013404">
    <property type="pathway name" value="RAC2 GTPase cycle"/>
</dbReference>
<dbReference type="Reactome" id="R-DDI-9013407">
    <property type="pathway name" value="RHOH GTPase cycle"/>
</dbReference>
<dbReference type="Reactome" id="R-DDI-9013408">
    <property type="pathway name" value="RHOG GTPase cycle"/>
</dbReference>
<dbReference type="Reactome" id="R-DDI-9013418">
    <property type="pathway name" value="RHOBTB2 GTPase cycle"/>
</dbReference>
<dbReference type="Reactome" id="R-DDI-9013422">
    <property type="pathway name" value="RHOBTB1 GTPase cycle"/>
</dbReference>
<dbReference type="PRO" id="PR:P34150"/>
<dbReference type="Proteomes" id="UP000002195">
    <property type="component" value="Chromosome 6"/>
</dbReference>
<dbReference type="GO" id="GO:0042995">
    <property type="term" value="C:cell projection"/>
    <property type="evidence" value="ECO:0000318"/>
    <property type="project" value="GO_Central"/>
</dbReference>
<dbReference type="GO" id="GO:0031410">
    <property type="term" value="C:cytoplasmic vesicle"/>
    <property type="evidence" value="ECO:0000318"/>
    <property type="project" value="GO_Central"/>
</dbReference>
<dbReference type="GO" id="GO:0005856">
    <property type="term" value="C:cytoskeleton"/>
    <property type="evidence" value="ECO:0000318"/>
    <property type="project" value="GO_Central"/>
</dbReference>
<dbReference type="GO" id="GO:0005886">
    <property type="term" value="C:plasma membrane"/>
    <property type="evidence" value="ECO:0000318"/>
    <property type="project" value="GO_Central"/>
</dbReference>
<dbReference type="GO" id="GO:0005525">
    <property type="term" value="F:GTP binding"/>
    <property type="evidence" value="ECO:0000318"/>
    <property type="project" value="GO_Central"/>
</dbReference>
<dbReference type="GO" id="GO:0003924">
    <property type="term" value="F:GTPase activity"/>
    <property type="evidence" value="ECO:0000318"/>
    <property type="project" value="GO_Central"/>
</dbReference>
<dbReference type="GO" id="GO:0019901">
    <property type="term" value="F:protein kinase binding"/>
    <property type="evidence" value="ECO:0000318"/>
    <property type="project" value="GO_Central"/>
</dbReference>
<dbReference type="GO" id="GO:0007015">
    <property type="term" value="P:actin filament organization"/>
    <property type="evidence" value="ECO:0000318"/>
    <property type="project" value="GO_Central"/>
</dbReference>
<dbReference type="GO" id="GO:0030865">
    <property type="term" value="P:cortical cytoskeleton organization"/>
    <property type="evidence" value="ECO:0000318"/>
    <property type="project" value="GO_Central"/>
</dbReference>
<dbReference type="GO" id="GO:0007163">
    <property type="term" value="P:establishment or maintenance of cell polarity"/>
    <property type="evidence" value="ECO:0000318"/>
    <property type="project" value="GO_Central"/>
</dbReference>
<dbReference type="GO" id="GO:0032956">
    <property type="term" value="P:regulation of actin cytoskeleton organization"/>
    <property type="evidence" value="ECO:0000318"/>
    <property type="project" value="GO_Central"/>
</dbReference>
<dbReference type="GO" id="GO:0008360">
    <property type="term" value="P:regulation of cell shape"/>
    <property type="evidence" value="ECO:0000318"/>
    <property type="project" value="GO_Central"/>
</dbReference>
<dbReference type="GO" id="GO:0007165">
    <property type="term" value="P:signal transduction"/>
    <property type="evidence" value="ECO:0000318"/>
    <property type="project" value="GO_Central"/>
</dbReference>
<dbReference type="GO" id="GO:0007264">
    <property type="term" value="P:small GTPase-mediated signal transduction"/>
    <property type="evidence" value="ECO:0007669"/>
    <property type="project" value="InterPro"/>
</dbReference>
<dbReference type="CDD" id="cd00157">
    <property type="entry name" value="Rho"/>
    <property type="match status" value="1"/>
</dbReference>
<dbReference type="FunFam" id="3.40.50.300:FF:001179">
    <property type="entry name" value="Rho family GTPase"/>
    <property type="match status" value="1"/>
</dbReference>
<dbReference type="Gene3D" id="3.40.50.300">
    <property type="entry name" value="P-loop containing nucleotide triphosphate hydrolases"/>
    <property type="match status" value="1"/>
</dbReference>
<dbReference type="InterPro" id="IPR027417">
    <property type="entry name" value="P-loop_NTPase"/>
</dbReference>
<dbReference type="InterPro" id="IPR005225">
    <property type="entry name" value="Small_GTP-bd"/>
</dbReference>
<dbReference type="InterPro" id="IPR001806">
    <property type="entry name" value="Small_GTPase"/>
</dbReference>
<dbReference type="InterPro" id="IPR003578">
    <property type="entry name" value="Small_GTPase_Rho"/>
</dbReference>
<dbReference type="NCBIfam" id="TIGR00231">
    <property type="entry name" value="small_GTP"/>
    <property type="match status" value="1"/>
</dbReference>
<dbReference type="PANTHER" id="PTHR24072">
    <property type="entry name" value="RHO FAMILY GTPASE"/>
    <property type="match status" value="1"/>
</dbReference>
<dbReference type="Pfam" id="PF00071">
    <property type="entry name" value="Ras"/>
    <property type="match status" value="1"/>
</dbReference>
<dbReference type="PRINTS" id="PR00449">
    <property type="entry name" value="RASTRNSFRMNG"/>
</dbReference>
<dbReference type="SMART" id="SM00175">
    <property type="entry name" value="RAB"/>
    <property type="match status" value="1"/>
</dbReference>
<dbReference type="SMART" id="SM00176">
    <property type="entry name" value="RAN"/>
    <property type="match status" value="1"/>
</dbReference>
<dbReference type="SMART" id="SM00173">
    <property type="entry name" value="RAS"/>
    <property type="match status" value="1"/>
</dbReference>
<dbReference type="SMART" id="SM00174">
    <property type="entry name" value="RHO"/>
    <property type="match status" value="1"/>
</dbReference>
<dbReference type="SUPFAM" id="SSF52540">
    <property type="entry name" value="P-loop containing nucleoside triphosphate hydrolases"/>
    <property type="match status" value="1"/>
</dbReference>
<dbReference type="PROSITE" id="PS51420">
    <property type="entry name" value="RHO"/>
    <property type="match status" value="1"/>
</dbReference>
<organism>
    <name type="scientific">Dictyostelium discoideum</name>
    <name type="common">Social amoeba</name>
    <dbReference type="NCBI Taxonomy" id="44689"/>
    <lineage>
        <taxon>Eukaryota</taxon>
        <taxon>Amoebozoa</taxon>
        <taxon>Evosea</taxon>
        <taxon>Eumycetozoa</taxon>
        <taxon>Dictyostelia</taxon>
        <taxon>Dictyosteliales</taxon>
        <taxon>Dictyosteliaceae</taxon>
        <taxon>Dictyostelium</taxon>
    </lineage>
</organism>
<protein>
    <recommendedName>
        <fullName>Rho-related protein racD</fullName>
    </recommendedName>
</protein>
<sequence length="254" mass="27558">MVTGIKKTVKVVVVGDGAVGKTSLLILYTTKAFPKDYVPTVFDNFNCLEMYDNKPVNLVLWDTAGQEDYDNLRPLSYPQTDVFIICYSVVKRDSLDNIKYKWLPEINQTNQGTPIILVGTKTDLREDKKTLSQLQESKQEPVSRDEGVALAKEIGAVQFFECSALTGNGVNDIFAAAIKAAFNKPAVTSPTSKSSGKSSPSSTSSKPSKTTTTTTTSSSSSSPPAASTAKPAGEKKLSWGLFRKKDKDEKKPAK</sequence>
<reference key="1">
    <citation type="journal article" date="2001" name="Nucleic Acids Res.">
        <title>The Dictyostelium discoideum family of Rho-related proteins.</title>
        <authorList>
            <person name="Rivero F."/>
            <person name="Dislich H."/>
            <person name="Gloeckner G."/>
            <person name="Noegel A.A."/>
        </authorList>
    </citation>
    <scope>NUCLEOTIDE SEQUENCE [GENOMIC DNA]</scope>
    <source>
        <strain>AX4</strain>
    </source>
</reference>
<reference key="2">
    <citation type="journal article" date="2005" name="Nature">
        <title>The genome of the social amoeba Dictyostelium discoideum.</title>
        <authorList>
            <person name="Eichinger L."/>
            <person name="Pachebat J.A."/>
            <person name="Gloeckner G."/>
            <person name="Rajandream M.A."/>
            <person name="Sucgang R."/>
            <person name="Berriman M."/>
            <person name="Song J."/>
            <person name="Olsen R."/>
            <person name="Szafranski K."/>
            <person name="Xu Q."/>
            <person name="Tunggal B."/>
            <person name="Kummerfeld S."/>
            <person name="Madera M."/>
            <person name="Konfortov B.A."/>
            <person name="Rivero F."/>
            <person name="Bankier A.T."/>
            <person name="Lehmann R."/>
            <person name="Hamlin N."/>
            <person name="Davies R."/>
            <person name="Gaudet P."/>
            <person name="Fey P."/>
            <person name="Pilcher K."/>
            <person name="Chen G."/>
            <person name="Saunders D."/>
            <person name="Sodergren E.J."/>
            <person name="Davis P."/>
            <person name="Kerhornou A."/>
            <person name="Nie X."/>
            <person name="Hall N."/>
            <person name="Anjard C."/>
            <person name="Hemphill L."/>
            <person name="Bason N."/>
            <person name="Farbrother P."/>
            <person name="Desany B."/>
            <person name="Just E."/>
            <person name="Morio T."/>
            <person name="Rost R."/>
            <person name="Churcher C.M."/>
            <person name="Cooper J."/>
            <person name="Haydock S."/>
            <person name="van Driessche N."/>
            <person name="Cronin A."/>
            <person name="Goodhead I."/>
            <person name="Muzny D.M."/>
            <person name="Mourier T."/>
            <person name="Pain A."/>
            <person name="Lu M."/>
            <person name="Harper D."/>
            <person name="Lindsay R."/>
            <person name="Hauser H."/>
            <person name="James K.D."/>
            <person name="Quiles M."/>
            <person name="Madan Babu M."/>
            <person name="Saito T."/>
            <person name="Buchrieser C."/>
            <person name="Wardroper A."/>
            <person name="Felder M."/>
            <person name="Thangavelu M."/>
            <person name="Johnson D."/>
            <person name="Knights A."/>
            <person name="Loulseged H."/>
            <person name="Mungall K.L."/>
            <person name="Oliver K."/>
            <person name="Price C."/>
            <person name="Quail M.A."/>
            <person name="Urushihara H."/>
            <person name="Hernandez J."/>
            <person name="Rabbinowitsch E."/>
            <person name="Steffen D."/>
            <person name="Sanders M."/>
            <person name="Ma J."/>
            <person name="Kohara Y."/>
            <person name="Sharp S."/>
            <person name="Simmonds M.N."/>
            <person name="Spiegler S."/>
            <person name="Tivey A."/>
            <person name="Sugano S."/>
            <person name="White B."/>
            <person name="Walker D."/>
            <person name="Woodward J.R."/>
            <person name="Winckler T."/>
            <person name="Tanaka Y."/>
            <person name="Shaulsky G."/>
            <person name="Schleicher M."/>
            <person name="Weinstock G.M."/>
            <person name="Rosenthal A."/>
            <person name="Cox E.C."/>
            <person name="Chisholm R.L."/>
            <person name="Gibbs R.A."/>
            <person name="Loomis W.F."/>
            <person name="Platzer M."/>
            <person name="Kay R.R."/>
            <person name="Williams J.G."/>
            <person name="Dear P.H."/>
            <person name="Noegel A.A."/>
            <person name="Barrell B.G."/>
            <person name="Kuspa A."/>
        </authorList>
    </citation>
    <scope>NUCLEOTIDE SEQUENCE [LARGE SCALE GENOMIC DNA]</scope>
    <source>
        <strain>AX4</strain>
    </source>
</reference>
<reference key="3">
    <citation type="journal article" date="1993" name="Gene">
        <title>Cloning and characterization of seven novel Dictyostelium discoideum rac-related genes belonging to the rho family of GTPases.</title>
        <authorList>
            <person name="Bush J.M. IV"/>
            <person name="Franek K."/>
            <person name="Cardelli J.A."/>
        </authorList>
    </citation>
    <scope>NUCLEOTIDE SEQUENCE [MRNA] OF 8-194</scope>
    <source>
        <strain>AX3</strain>
    </source>
</reference>
<gene>
    <name type="primary">racD</name>
    <name type="ORF">DDB_G0291976</name>
</gene>
<feature type="chain" id="PRO_0000198901" description="Rho-related protein racD">
    <location>
        <begin position="1"/>
        <end position="254"/>
    </location>
</feature>
<feature type="region of interest" description="Disordered" evidence="3">
    <location>
        <begin position="186"/>
        <end position="254"/>
    </location>
</feature>
<feature type="short sequence motif" description="Effector region" evidence="2">
    <location>
        <begin position="37"/>
        <end position="45"/>
    </location>
</feature>
<feature type="compositionally biased region" description="Low complexity" evidence="3">
    <location>
        <begin position="186"/>
        <end position="231"/>
    </location>
</feature>
<feature type="compositionally biased region" description="Basic and acidic residues" evidence="3">
    <location>
        <begin position="232"/>
        <end position="254"/>
    </location>
</feature>
<feature type="binding site" evidence="1">
    <location>
        <begin position="15"/>
        <end position="22"/>
    </location>
    <ligand>
        <name>GTP</name>
        <dbReference type="ChEBI" id="CHEBI:37565"/>
    </ligand>
</feature>
<feature type="binding site" evidence="1">
    <location>
        <begin position="62"/>
        <end position="66"/>
    </location>
    <ligand>
        <name>GTP</name>
        <dbReference type="ChEBI" id="CHEBI:37565"/>
    </ligand>
</feature>
<feature type="binding site" evidence="1">
    <location>
        <begin position="120"/>
        <end position="123"/>
    </location>
    <ligand>
        <name>GTP</name>
        <dbReference type="ChEBI" id="CHEBI:37565"/>
    </ligand>
</feature>
<feature type="sequence conflict" description="In Ref. 1; AAG45121." evidence="4" ref="1">
    <original>V</original>
    <variation>A</variation>
    <location>
        <position position="2"/>
    </location>
</feature>
<evidence type="ECO:0000250" key="1"/>
<evidence type="ECO:0000255" key="2"/>
<evidence type="ECO:0000256" key="3">
    <source>
        <dbReference type="SAM" id="MobiDB-lite"/>
    </source>
</evidence>
<evidence type="ECO:0000305" key="4"/>
<comment type="similarity">
    <text evidence="4">Belongs to the small GTPase superfamily. Rho family.</text>
</comment>
<proteinExistence type="evidence at transcript level"/>
<accession>P34150</accession>
<accession>Q54DN4</accession>
<accession>Q9GPS8</accession>
<keyword id="KW-0342">GTP-binding</keyword>
<keyword id="KW-0547">Nucleotide-binding</keyword>
<keyword id="KW-1185">Reference proteome</keyword>
<name>RACD_DICDI</name>